<accession>A6KWR2</accession>
<gene>
    <name evidence="1" type="primary">rplS</name>
    <name type="ordered locus">BVU_0148</name>
</gene>
<keyword id="KW-0687">Ribonucleoprotein</keyword>
<keyword id="KW-0689">Ribosomal protein</keyword>
<comment type="function">
    <text evidence="1">This protein is located at the 30S-50S ribosomal subunit interface and may play a role in the structure and function of the aminoacyl-tRNA binding site.</text>
</comment>
<comment type="similarity">
    <text evidence="1">Belongs to the bacterial ribosomal protein bL19 family.</text>
</comment>
<organism>
    <name type="scientific">Phocaeicola vulgatus (strain ATCC 8482 / DSM 1447 / JCM 5826 / CCUG 4940 / NBRC 14291 / NCTC 11154)</name>
    <name type="common">Bacteroides vulgatus</name>
    <dbReference type="NCBI Taxonomy" id="435590"/>
    <lineage>
        <taxon>Bacteria</taxon>
        <taxon>Pseudomonadati</taxon>
        <taxon>Bacteroidota</taxon>
        <taxon>Bacteroidia</taxon>
        <taxon>Bacteroidales</taxon>
        <taxon>Bacteroidaceae</taxon>
        <taxon>Phocaeicola</taxon>
    </lineage>
</organism>
<name>RL19_PHOV8</name>
<reference key="1">
    <citation type="journal article" date="2007" name="PLoS Biol.">
        <title>Evolution of symbiotic bacteria in the distal human intestine.</title>
        <authorList>
            <person name="Xu J."/>
            <person name="Mahowald M.A."/>
            <person name="Ley R.E."/>
            <person name="Lozupone C.A."/>
            <person name="Hamady M."/>
            <person name="Martens E.C."/>
            <person name="Henrissat B."/>
            <person name="Coutinho P.M."/>
            <person name="Minx P."/>
            <person name="Latreille P."/>
            <person name="Cordum H."/>
            <person name="Van Brunt A."/>
            <person name="Kim K."/>
            <person name="Fulton R.S."/>
            <person name="Fulton L.A."/>
            <person name="Clifton S.W."/>
            <person name="Wilson R.K."/>
            <person name="Knight R.D."/>
            <person name="Gordon J.I."/>
        </authorList>
    </citation>
    <scope>NUCLEOTIDE SEQUENCE [LARGE SCALE GENOMIC DNA]</scope>
    <source>
        <strain>ATCC 8482 / DSM 1447 / JCM 5826 / CCUG 4940 / NBRC 14291 / NCTC 11154</strain>
    </source>
</reference>
<sequence length="117" mass="13129">MDLIKIAEEAFATGKQHPSFKAGDTITVAYRIVEGSKERVQLYRGVVIKIAGHGDKKRFTVRKMSGTVGVERIFPIESPAIDSITVNKVGKVRRAKLYYLRALTGKKARIQEKRVNQ</sequence>
<protein>
    <recommendedName>
        <fullName evidence="1">Large ribosomal subunit protein bL19</fullName>
    </recommendedName>
    <alternativeName>
        <fullName evidence="2">50S ribosomal protein L19</fullName>
    </alternativeName>
</protein>
<feature type="chain" id="PRO_1000049636" description="Large ribosomal subunit protein bL19">
    <location>
        <begin position="1"/>
        <end position="117"/>
    </location>
</feature>
<evidence type="ECO:0000255" key="1">
    <source>
        <dbReference type="HAMAP-Rule" id="MF_00402"/>
    </source>
</evidence>
<evidence type="ECO:0000305" key="2"/>
<proteinExistence type="inferred from homology"/>
<dbReference type="EMBL" id="CP000139">
    <property type="protein sequence ID" value="ABR37876.1"/>
    <property type="molecule type" value="Genomic_DNA"/>
</dbReference>
<dbReference type="RefSeq" id="WP_005841919.1">
    <property type="nucleotide sequence ID" value="NZ_JANSWM010000057.1"/>
</dbReference>
<dbReference type="SMR" id="A6KWR2"/>
<dbReference type="STRING" id="435590.BVU_0148"/>
<dbReference type="PaxDb" id="435590-BVU_0148"/>
<dbReference type="GeneID" id="93448385"/>
<dbReference type="KEGG" id="bvu:BVU_0148"/>
<dbReference type="eggNOG" id="COG0335">
    <property type="taxonomic scope" value="Bacteria"/>
</dbReference>
<dbReference type="HOGENOM" id="CLU_103507_2_2_10"/>
<dbReference type="BioCyc" id="BVUL435590:G1G59-155-MONOMER"/>
<dbReference type="Proteomes" id="UP000002861">
    <property type="component" value="Chromosome"/>
</dbReference>
<dbReference type="GO" id="GO:0022625">
    <property type="term" value="C:cytosolic large ribosomal subunit"/>
    <property type="evidence" value="ECO:0007669"/>
    <property type="project" value="TreeGrafter"/>
</dbReference>
<dbReference type="GO" id="GO:0003735">
    <property type="term" value="F:structural constituent of ribosome"/>
    <property type="evidence" value="ECO:0007669"/>
    <property type="project" value="InterPro"/>
</dbReference>
<dbReference type="GO" id="GO:0006412">
    <property type="term" value="P:translation"/>
    <property type="evidence" value="ECO:0007669"/>
    <property type="project" value="UniProtKB-UniRule"/>
</dbReference>
<dbReference type="FunFam" id="2.30.30.790:FF:000001">
    <property type="entry name" value="50S ribosomal protein L19"/>
    <property type="match status" value="1"/>
</dbReference>
<dbReference type="Gene3D" id="2.30.30.790">
    <property type="match status" value="1"/>
</dbReference>
<dbReference type="HAMAP" id="MF_00402">
    <property type="entry name" value="Ribosomal_bL19"/>
    <property type="match status" value="1"/>
</dbReference>
<dbReference type="InterPro" id="IPR001857">
    <property type="entry name" value="Ribosomal_bL19"/>
</dbReference>
<dbReference type="InterPro" id="IPR018257">
    <property type="entry name" value="Ribosomal_bL19_CS"/>
</dbReference>
<dbReference type="InterPro" id="IPR038657">
    <property type="entry name" value="Ribosomal_bL19_sf"/>
</dbReference>
<dbReference type="InterPro" id="IPR008991">
    <property type="entry name" value="Translation_prot_SH3-like_sf"/>
</dbReference>
<dbReference type="NCBIfam" id="TIGR01024">
    <property type="entry name" value="rplS_bact"/>
    <property type="match status" value="1"/>
</dbReference>
<dbReference type="PANTHER" id="PTHR15680:SF9">
    <property type="entry name" value="LARGE RIBOSOMAL SUBUNIT PROTEIN BL19M"/>
    <property type="match status" value="1"/>
</dbReference>
<dbReference type="PANTHER" id="PTHR15680">
    <property type="entry name" value="RIBOSOMAL PROTEIN L19"/>
    <property type="match status" value="1"/>
</dbReference>
<dbReference type="Pfam" id="PF01245">
    <property type="entry name" value="Ribosomal_L19"/>
    <property type="match status" value="1"/>
</dbReference>
<dbReference type="PIRSF" id="PIRSF002191">
    <property type="entry name" value="Ribosomal_L19"/>
    <property type="match status" value="1"/>
</dbReference>
<dbReference type="PRINTS" id="PR00061">
    <property type="entry name" value="RIBOSOMALL19"/>
</dbReference>
<dbReference type="SUPFAM" id="SSF50104">
    <property type="entry name" value="Translation proteins SH3-like domain"/>
    <property type="match status" value="1"/>
</dbReference>
<dbReference type="PROSITE" id="PS01015">
    <property type="entry name" value="RIBOSOMAL_L19"/>
    <property type="match status" value="1"/>
</dbReference>